<dbReference type="EC" id="4.1.1.11" evidence="1"/>
<dbReference type="EMBL" id="CP001145">
    <property type="protein sequence ID" value="ACI17740.1"/>
    <property type="molecule type" value="Genomic_DNA"/>
</dbReference>
<dbReference type="RefSeq" id="WP_012544392.1">
    <property type="nucleotide sequence ID" value="NC_011295.1"/>
</dbReference>
<dbReference type="SMR" id="B5Y862"/>
<dbReference type="STRING" id="309798.COPRO5265_0604"/>
<dbReference type="KEGG" id="cpo:COPRO5265_0604"/>
<dbReference type="eggNOG" id="COG0853">
    <property type="taxonomic scope" value="Bacteria"/>
</dbReference>
<dbReference type="HOGENOM" id="CLU_115305_2_1_9"/>
<dbReference type="OrthoDB" id="9803983at2"/>
<dbReference type="UniPathway" id="UPA00028">
    <property type="reaction ID" value="UER00002"/>
</dbReference>
<dbReference type="Proteomes" id="UP000001732">
    <property type="component" value="Chromosome"/>
</dbReference>
<dbReference type="GO" id="GO:0005829">
    <property type="term" value="C:cytosol"/>
    <property type="evidence" value="ECO:0007669"/>
    <property type="project" value="TreeGrafter"/>
</dbReference>
<dbReference type="GO" id="GO:0004068">
    <property type="term" value="F:aspartate 1-decarboxylase activity"/>
    <property type="evidence" value="ECO:0007669"/>
    <property type="project" value="UniProtKB-UniRule"/>
</dbReference>
<dbReference type="GO" id="GO:0006523">
    <property type="term" value="P:alanine biosynthetic process"/>
    <property type="evidence" value="ECO:0007669"/>
    <property type="project" value="InterPro"/>
</dbReference>
<dbReference type="GO" id="GO:0015940">
    <property type="term" value="P:pantothenate biosynthetic process"/>
    <property type="evidence" value="ECO:0007669"/>
    <property type="project" value="UniProtKB-UniRule"/>
</dbReference>
<dbReference type="CDD" id="cd06919">
    <property type="entry name" value="Asp_decarbox"/>
    <property type="match status" value="1"/>
</dbReference>
<dbReference type="Gene3D" id="2.40.40.20">
    <property type="match status" value="1"/>
</dbReference>
<dbReference type="HAMAP" id="MF_00446">
    <property type="entry name" value="PanD"/>
    <property type="match status" value="1"/>
</dbReference>
<dbReference type="InterPro" id="IPR009010">
    <property type="entry name" value="Asp_de-COase-like_dom_sf"/>
</dbReference>
<dbReference type="InterPro" id="IPR003190">
    <property type="entry name" value="Asp_decarbox"/>
</dbReference>
<dbReference type="NCBIfam" id="TIGR00223">
    <property type="entry name" value="panD"/>
    <property type="match status" value="1"/>
</dbReference>
<dbReference type="PANTHER" id="PTHR21012">
    <property type="entry name" value="ASPARTATE 1-DECARBOXYLASE"/>
    <property type="match status" value="1"/>
</dbReference>
<dbReference type="PANTHER" id="PTHR21012:SF0">
    <property type="entry name" value="ASPARTATE 1-DECARBOXYLASE"/>
    <property type="match status" value="1"/>
</dbReference>
<dbReference type="Pfam" id="PF02261">
    <property type="entry name" value="Asp_decarbox"/>
    <property type="match status" value="1"/>
</dbReference>
<dbReference type="PIRSF" id="PIRSF006246">
    <property type="entry name" value="Asp_decarbox"/>
    <property type="match status" value="1"/>
</dbReference>
<dbReference type="SUPFAM" id="SSF50692">
    <property type="entry name" value="ADC-like"/>
    <property type="match status" value="1"/>
</dbReference>
<feature type="chain" id="PRO_1000191964" description="Aspartate 1-decarboxylase beta chain" evidence="1">
    <location>
        <begin position="1"/>
        <end position="24"/>
    </location>
</feature>
<feature type="chain" id="PRO_1000191965" description="Aspartate 1-decarboxylase alpha chain" evidence="1">
    <location>
        <begin position="25"/>
        <end position="120"/>
    </location>
</feature>
<feature type="active site" description="Schiff-base intermediate with substrate; via pyruvic acid" evidence="1">
    <location>
        <position position="25"/>
    </location>
</feature>
<feature type="active site" description="Proton donor" evidence="1">
    <location>
        <position position="58"/>
    </location>
</feature>
<feature type="binding site" evidence="1">
    <location>
        <position position="57"/>
    </location>
    <ligand>
        <name>substrate</name>
    </ligand>
</feature>
<feature type="binding site" evidence="1">
    <location>
        <begin position="73"/>
        <end position="75"/>
    </location>
    <ligand>
        <name>substrate</name>
    </ligand>
</feature>
<feature type="modified residue" description="Pyruvic acid (Ser)" evidence="1">
    <location>
        <position position="25"/>
    </location>
</feature>
<organism>
    <name type="scientific">Coprothermobacter proteolyticus (strain ATCC 35245 / DSM 5265 / OCM 4 / BT)</name>
    <dbReference type="NCBI Taxonomy" id="309798"/>
    <lineage>
        <taxon>Bacteria</taxon>
        <taxon>Pseudomonadati</taxon>
        <taxon>Coprothermobacterota</taxon>
        <taxon>Coprothermobacteria</taxon>
        <taxon>Coprothermobacterales</taxon>
        <taxon>Coprothermobacteraceae</taxon>
        <taxon>Coprothermobacter</taxon>
    </lineage>
</organism>
<protein>
    <recommendedName>
        <fullName evidence="1">Aspartate 1-decarboxylase</fullName>
        <ecNumber evidence="1">4.1.1.11</ecNumber>
    </recommendedName>
    <alternativeName>
        <fullName evidence="1">Aspartate alpha-decarboxylase</fullName>
    </alternativeName>
    <component>
        <recommendedName>
            <fullName evidence="1">Aspartate 1-decarboxylase beta chain</fullName>
        </recommendedName>
    </component>
    <component>
        <recommendedName>
            <fullName evidence="1">Aspartate 1-decarboxylase alpha chain</fullName>
        </recommendedName>
    </component>
</protein>
<sequence>MLITVLKSKIHNARVTVCNVDYEGSLSLDEELIKQANLRPYEKVLVANVTNGERFETYIIPAPANSREVGLNGAAARSAVVGDRVIVMAFAMKEPDEEVDTTVLIMDEENNIKEVKKLKA</sequence>
<evidence type="ECO:0000255" key="1">
    <source>
        <dbReference type="HAMAP-Rule" id="MF_00446"/>
    </source>
</evidence>
<gene>
    <name evidence="1" type="primary">panD</name>
    <name type="ordered locus">COPRO5265_0604</name>
</gene>
<comment type="function">
    <text evidence="1">Catalyzes the pyruvoyl-dependent decarboxylation of aspartate to produce beta-alanine.</text>
</comment>
<comment type="catalytic activity">
    <reaction evidence="1">
        <text>L-aspartate + H(+) = beta-alanine + CO2</text>
        <dbReference type="Rhea" id="RHEA:19497"/>
        <dbReference type="ChEBI" id="CHEBI:15378"/>
        <dbReference type="ChEBI" id="CHEBI:16526"/>
        <dbReference type="ChEBI" id="CHEBI:29991"/>
        <dbReference type="ChEBI" id="CHEBI:57966"/>
        <dbReference type="EC" id="4.1.1.11"/>
    </reaction>
</comment>
<comment type="cofactor">
    <cofactor evidence="1">
        <name>pyruvate</name>
        <dbReference type="ChEBI" id="CHEBI:15361"/>
    </cofactor>
    <text evidence="1">Binds 1 pyruvoyl group covalently per subunit.</text>
</comment>
<comment type="pathway">
    <text evidence="1">Cofactor biosynthesis; (R)-pantothenate biosynthesis; beta-alanine from L-aspartate: step 1/1.</text>
</comment>
<comment type="subunit">
    <text evidence="1">Heterooctamer of four alpha and four beta subunits.</text>
</comment>
<comment type="subcellular location">
    <subcellularLocation>
        <location evidence="1">Cytoplasm</location>
    </subcellularLocation>
</comment>
<comment type="PTM">
    <text evidence="1">Is synthesized initially as an inactive proenzyme, which is activated by self-cleavage at a specific serine bond to produce a beta-subunit with a hydroxyl group at its C-terminus and an alpha-subunit with a pyruvoyl group at its N-terminus.</text>
</comment>
<comment type="similarity">
    <text evidence="1">Belongs to the PanD family.</text>
</comment>
<keyword id="KW-0068">Autocatalytic cleavage</keyword>
<keyword id="KW-0963">Cytoplasm</keyword>
<keyword id="KW-0210">Decarboxylase</keyword>
<keyword id="KW-0456">Lyase</keyword>
<keyword id="KW-0566">Pantothenate biosynthesis</keyword>
<keyword id="KW-0670">Pyruvate</keyword>
<keyword id="KW-1185">Reference proteome</keyword>
<keyword id="KW-0704">Schiff base</keyword>
<keyword id="KW-0865">Zymogen</keyword>
<accession>B5Y862</accession>
<name>PAND_COPPD</name>
<proteinExistence type="inferred from homology"/>
<reference key="1">
    <citation type="submission" date="2008-08" db="EMBL/GenBank/DDBJ databases">
        <title>The complete genome sequence of Coprothermobacter proteolyticus strain ATCC 5245 / DSM 5265 / BT.</title>
        <authorList>
            <person name="Dodson R.J."/>
            <person name="Durkin A.S."/>
            <person name="Wu M."/>
            <person name="Eisen J."/>
            <person name="Sutton G."/>
        </authorList>
    </citation>
    <scope>NUCLEOTIDE SEQUENCE [LARGE SCALE GENOMIC DNA]</scope>
    <source>
        <strain>ATCC 35245 / DSM 5265 / OCM 4 / BT</strain>
    </source>
</reference>